<accession>P19682</accession>
<sequence>MATNGCLISLPPFFTTTKSISSYPFLSTQLKPISLSSSLPTLLSLNKRTTQFPTFVSVLSEDDNTLVLDDQEQGGDFPSFVGEAGETEEYQEPSEDAKLFVGNLPYDIDSEGLAQLFQQAGVVEIAEVIYNRETDRSRGFGFVTMSTVEEADKAVELYSQYDLNGRLLTVNKAAPRGSRPERAPRTFQPTYRIYVGNIPWDIDDARLEQVFSEHGKVVSARVVFDRESGRSRGFGFVTMSSEAEMSEAIANLDGQTLDGRTIRVNAAEERPRRNTY</sequence>
<comment type="function">
    <text>Probably involved in the 3'-end processing of chloroplast mRNA's.</text>
</comment>
<comment type="subcellular location">
    <subcellularLocation>
        <location>Plastid</location>
        <location>Chloroplast</location>
    </subcellularLocation>
</comment>
<keyword id="KW-0150">Chloroplast</keyword>
<keyword id="KW-0903">Direct protein sequencing</keyword>
<keyword id="KW-0507">mRNA processing</keyword>
<keyword id="KW-0934">Plastid</keyword>
<keyword id="KW-1185">Reference proteome</keyword>
<keyword id="KW-0677">Repeat</keyword>
<keyword id="KW-0687">Ribonucleoprotein</keyword>
<keyword id="KW-0694">RNA-binding</keyword>
<keyword id="KW-0809">Transit peptide</keyword>
<feature type="transit peptide" description="Chloroplast" evidence="2">
    <location>
        <begin position="1"/>
        <end position="57"/>
    </location>
</feature>
<feature type="chain" id="PRO_0000031028" description="28 kDa ribonucleoprotein, chloroplastic">
    <location>
        <begin position="58"/>
        <end position="276"/>
    </location>
</feature>
<feature type="domain" description="RRM 1" evidence="1">
    <location>
        <begin position="97"/>
        <end position="175"/>
    </location>
</feature>
<feature type="domain" description="RRM 2" evidence="1">
    <location>
        <begin position="191"/>
        <end position="269"/>
    </location>
</feature>
<proteinExistence type="evidence at protein level"/>
<organism>
    <name type="scientific">Nicotiana sylvestris</name>
    <name type="common">Wood tobacco</name>
    <name type="synonym">South American tobacco</name>
    <dbReference type="NCBI Taxonomy" id="4096"/>
    <lineage>
        <taxon>Eukaryota</taxon>
        <taxon>Viridiplantae</taxon>
        <taxon>Streptophyta</taxon>
        <taxon>Embryophyta</taxon>
        <taxon>Tracheophyta</taxon>
        <taxon>Spermatophyta</taxon>
        <taxon>Magnoliopsida</taxon>
        <taxon>eudicotyledons</taxon>
        <taxon>Gunneridae</taxon>
        <taxon>Pentapetalae</taxon>
        <taxon>asterids</taxon>
        <taxon>lamiids</taxon>
        <taxon>Solanales</taxon>
        <taxon>Solanaceae</taxon>
        <taxon>Nicotianoideae</taxon>
        <taxon>Nicotianeae</taxon>
        <taxon>Nicotiana</taxon>
    </lineage>
</organism>
<reference key="1">
    <citation type="journal article" date="1990" name="EMBO J.">
        <title>Three distinct ribonucleoproteins from tobacco chloroplasts: each contains a unique amino terminal acidic domain and two ribonucleoprotein consensus motifs.</title>
        <authorList>
            <person name="Li Y."/>
            <person name="Sugiura M."/>
        </authorList>
    </citation>
    <scope>NUCLEOTIDE SEQUENCE [MRNA]</scope>
    <scope>PROTEIN SEQUENCE OF 58-78</scope>
    <source>
        <strain>cv. Bright Yellow 4</strain>
    </source>
</reference>
<name>ROC3_NICSY</name>
<dbReference type="EMBL" id="X53933">
    <property type="protein sequence ID" value="CAA37880.1"/>
    <property type="molecule type" value="mRNA"/>
</dbReference>
<dbReference type="SMR" id="P19682"/>
<dbReference type="STRING" id="4096.P19682"/>
<dbReference type="eggNOG" id="KOG0118">
    <property type="taxonomic scope" value="Eukaryota"/>
</dbReference>
<dbReference type="Proteomes" id="UP000189701">
    <property type="component" value="Unplaced"/>
</dbReference>
<dbReference type="GO" id="GO:0009535">
    <property type="term" value="C:chloroplast thylakoid membrane"/>
    <property type="evidence" value="ECO:0007669"/>
    <property type="project" value="TreeGrafter"/>
</dbReference>
<dbReference type="GO" id="GO:1990904">
    <property type="term" value="C:ribonucleoprotein complex"/>
    <property type="evidence" value="ECO:0007669"/>
    <property type="project" value="UniProtKB-KW"/>
</dbReference>
<dbReference type="GO" id="GO:0003729">
    <property type="term" value="F:mRNA binding"/>
    <property type="evidence" value="ECO:0007669"/>
    <property type="project" value="TreeGrafter"/>
</dbReference>
<dbReference type="GO" id="GO:1901259">
    <property type="term" value="P:chloroplast rRNA processing"/>
    <property type="evidence" value="ECO:0007669"/>
    <property type="project" value="TreeGrafter"/>
</dbReference>
<dbReference type="GO" id="GO:0006397">
    <property type="term" value="P:mRNA processing"/>
    <property type="evidence" value="ECO:0007669"/>
    <property type="project" value="UniProtKB-KW"/>
</dbReference>
<dbReference type="CDD" id="cd21608">
    <property type="entry name" value="RRM2_NsCP33_like"/>
    <property type="match status" value="1"/>
</dbReference>
<dbReference type="FunFam" id="3.30.70.330:FF:000268">
    <property type="entry name" value="31 kDa ribonucleoprotein, chloroplastic"/>
    <property type="match status" value="1"/>
</dbReference>
<dbReference type="Gene3D" id="3.30.70.330">
    <property type="match status" value="2"/>
</dbReference>
<dbReference type="InterPro" id="IPR050502">
    <property type="entry name" value="Euk_RNA-bind_prot"/>
</dbReference>
<dbReference type="InterPro" id="IPR012677">
    <property type="entry name" value="Nucleotide-bd_a/b_plait_sf"/>
</dbReference>
<dbReference type="InterPro" id="IPR035979">
    <property type="entry name" value="RBD_domain_sf"/>
</dbReference>
<dbReference type="InterPro" id="IPR048289">
    <property type="entry name" value="RRM2_NsCP33-like"/>
</dbReference>
<dbReference type="InterPro" id="IPR000504">
    <property type="entry name" value="RRM_dom"/>
</dbReference>
<dbReference type="PANTHER" id="PTHR48025:SF23">
    <property type="entry name" value="31 KDA RIBONUCLEOPROTEIN, CHLOROPLASTIC"/>
    <property type="match status" value="1"/>
</dbReference>
<dbReference type="PANTHER" id="PTHR48025">
    <property type="entry name" value="OS02G0815200 PROTEIN"/>
    <property type="match status" value="1"/>
</dbReference>
<dbReference type="Pfam" id="PF00076">
    <property type="entry name" value="RRM_1"/>
    <property type="match status" value="2"/>
</dbReference>
<dbReference type="SMART" id="SM00360">
    <property type="entry name" value="RRM"/>
    <property type="match status" value="2"/>
</dbReference>
<dbReference type="SUPFAM" id="SSF54928">
    <property type="entry name" value="RNA-binding domain, RBD"/>
    <property type="match status" value="2"/>
</dbReference>
<dbReference type="PROSITE" id="PS50102">
    <property type="entry name" value="RRM"/>
    <property type="match status" value="2"/>
</dbReference>
<protein>
    <recommendedName>
        <fullName>28 kDa ribonucleoprotein, chloroplastic</fullName>
        <shortName>28RNP</shortName>
    </recommendedName>
</protein>
<evidence type="ECO:0000255" key="1">
    <source>
        <dbReference type="PROSITE-ProRule" id="PRU00176"/>
    </source>
</evidence>
<evidence type="ECO:0000269" key="2">
    <source>
    </source>
</evidence>